<proteinExistence type="evidence at transcript level"/>
<accession>Q9D6Z6</accession>
<accession>Q8R461</accession>
<name>IL36B_MOUSE</name>
<reference key="1">
    <citation type="journal article" date="2002" name="Genomics">
        <title>Genomic organization of the interleukin-1 locus.</title>
        <authorList>
            <person name="Taylor S.L."/>
            <person name="Renshaw B.R."/>
            <person name="Garka K.E."/>
            <person name="Smith D.E."/>
            <person name="Sims J.E."/>
        </authorList>
    </citation>
    <scope>NUCLEOTIDE SEQUENCE [MRNA]</scope>
    <source>
        <strain>Swiss Webster / NIH</strain>
    </source>
</reference>
<reference key="2">
    <citation type="journal article" date="2005" name="Science">
        <title>The transcriptional landscape of the mammalian genome.</title>
        <authorList>
            <person name="Carninci P."/>
            <person name="Kasukawa T."/>
            <person name="Katayama S."/>
            <person name="Gough J."/>
            <person name="Frith M.C."/>
            <person name="Maeda N."/>
            <person name="Oyama R."/>
            <person name="Ravasi T."/>
            <person name="Lenhard B."/>
            <person name="Wells C."/>
            <person name="Kodzius R."/>
            <person name="Shimokawa K."/>
            <person name="Bajic V.B."/>
            <person name="Brenner S.E."/>
            <person name="Batalov S."/>
            <person name="Forrest A.R."/>
            <person name="Zavolan M."/>
            <person name="Davis M.J."/>
            <person name="Wilming L.G."/>
            <person name="Aidinis V."/>
            <person name="Allen J.E."/>
            <person name="Ambesi-Impiombato A."/>
            <person name="Apweiler R."/>
            <person name="Aturaliya R.N."/>
            <person name="Bailey T.L."/>
            <person name="Bansal M."/>
            <person name="Baxter L."/>
            <person name="Beisel K.W."/>
            <person name="Bersano T."/>
            <person name="Bono H."/>
            <person name="Chalk A.M."/>
            <person name="Chiu K.P."/>
            <person name="Choudhary V."/>
            <person name="Christoffels A."/>
            <person name="Clutterbuck D.R."/>
            <person name="Crowe M.L."/>
            <person name="Dalla E."/>
            <person name="Dalrymple B.P."/>
            <person name="de Bono B."/>
            <person name="Della Gatta G."/>
            <person name="di Bernardo D."/>
            <person name="Down T."/>
            <person name="Engstrom P."/>
            <person name="Fagiolini M."/>
            <person name="Faulkner G."/>
            <person name="Fletcher C.F."/>
            <person name="Fukushima T."/>
            <person name="Furuno M."/>
            <person name="Futaki S."/>
            <person name="Gariboldi M."/>
            <person name="Georgii-Hemming P."/>
            <person name="Gingeras T.R."/>
            <person name="Gojobori T."/>
            <person name="Green R.E."/>
            <person name="Gustincich S."/>
            <person name="Harbers M."/>
            <person name="Hayashi Y."/>
            <person name="Hensch T.K."/>
            <person name="Hirokawa N."/>
            <person name="Hill D."/>
            <person name="Huminiecki L."/>
            <person name="Iacono M."/>
            <person name="Ikeo K."/>
            <person name="Iwama A."/>
            <person name="Ishikawa T."/>
            <person name="Jakt M."/>
            <person name="Kanapin A."/>
            <person name="Katoh M."/>
            <person name="Kawasawa Y."/>
            <person name="Kelso J."/>
            <person name="Kitamura H."/>
            <person name="Kitano H."/>
            <person name="Kollias G."/>
            <person name="Krishnan S.P."/>
            <person name="Kruger A."/>
            <person name="Kummerfeld S.K."/>
            <person name="Kurochkin I.V."/>
            <person name="Lareau L.F."/>
            <person name="Lazarevic D."/>
            <person name="Lipovich L."/>
            <person name="Liu J."/>
            <person name="Liuni S."/>
            <person name="McWilliam S."/>
            <person name="Madan Babu M."/>
            <person name="Madera M."/>
            <person name="Marchionni L."/>
            <person name="Matsuda H."/>
            <person name="Matsuzawa S."/>
            <person name="Miki H."/>
            <person name="Mignone F."/>
            <person name="Miyake S."/>
            <person name="Morris K."/>
            <person name="Mottagui-Tabar S."/>
            <person name="Mulder N."/>
            <person name="Nakano N."/>
            <person name="Nakauchi H."/>
            <person name="Ng P."/>
            <person name="Nilsson R."/>
            <person name="Nishiguchi S."/>
            <person name="Nishikawa S."/>
            <person name="Nori F."/>
            <person name="Ohara O."/>
            <person name="Okazaki Y."/>
            <person name="Orlando V."/>
            <person name="Pang K.C."/>
            <person name="Pavan W.J."/>
            <person name="Pavesi G."/>
            <person name="Pesole G."/>
            <person name="Petrovsky N."/>
            <person name="Piazza S."/>
            <person name="Reed J."/>
            <person name="Reid J.F."/>
            <person name="Ring B.Z."/>
            <person name="Ringwald M."/>
            <person name="Rost B."/>
            <person name="Ruan Y."/>
            <person name="Salzberg S.L."/>
            <person name="Sandelin A."/>
            <person name="Schneider C."/>
            <person name="Schoenbach C."/>
            <person name="Sekiguchi K."/>
            <person name="Semple C.A."/>
            <person name="Seno S."/>
            <person name="Sessa L."/>
            <person name="Sheng Y."/>
            <person name="Shibata Y."/>
            <person name="Shimada H."/>
            <person name="Shimada K."/>
            <person name="Silva D."/>
            <person name="Sinclair B."/>
            <person name="Sperling S."/>
            <person name="Stupka E."/>
            <person name="Sugiura K."/>
            <person name="Sultana R."/>
            <person name="Takenaka Y."/>
            <person name="Taki K."/>
            <person name="Tammoja K."/>
            <person name="Tan S.L."/>
            <person name="Tang S."/>
            <person name="Taylor M.S."/>
            <person name="Tegner J."/>
            <person name="Teichmann S.A."/>
            <person name="Ueda H.R."/>
            <person name="van Nimwegen E."/>
            <person name="Verardo R."/>
            <person name="Wei C.L."/>
            <person name="Yagi K."/>
            <person name="Yamanishi H."/>
            <person name="Zabarovsky E."/>
            <person name="Zhu S."/>
            <person name="Zimmer A."/>
            <person name="Hide W."/>
            <person name="Bult C."/>
            <person name="Grimmond S.M."/>
            <person name="Teasdale R.D."/>
            <person name="Liu E.T."/>
            <person name="Brusic V."/>
            <person name="Quackenbush J."/>
            <person name="Wahlestedt C."/>
            <person name="Mattick J.S."/>
            <person name="Hume D.A."/>
            <person name="Kai C."/>
            <person name="Sasaki D."/>
            <person name="Tomaru Y."/>
            <person name="Fukuda S."/>
            <person name="Kanamori-Katayama M."/>
            <person name="Suzuki M."/>
            <person name="Aoki J."/>
            <person name="Arakawa T."/>
            <person name="Iida J."/>
            <person name="Imamura K."/>
            <person name="Itoh M."/>
            <person name="Kato T."/>
            <person name="Kawaji H."/>
            <person name="Kawagashira N."/>
            <person name="Kawashima T."/>
            <person name="Kojima M."/>
            <person name="Kondo S."/>
            <person name="Konno H."/>
            <person name="Nakano K."/>
            <person name="Ninomiya N."/>
            <person name="Nishio T."/>
            <person name="Okada M."/>
            <person name="Plessy C."/>
            <person name="Shibata K."/>
            <person name="Shiraki T."/>
            <person name="Suzuki S."/>
            <person name="Tagami M."/>
            <person name="Waki K."/>
            <person name="Watahiki A."/>
            <person name="Okamura-Oho Y."/>
            <person name="Suzuki H."/>
            <person name="Kawai J."/>
            <person name="Hayashizaki Y."/>
        </authorList>
    </citation>
    <scope>NUCLEOTIDE SEQUENCE [LARGE SCALE MRNA]</scope>
    <source>
        <strain>C57BL/6J</strain>
        <tissue>Tongue</tissue>
    </source>
</reference>
<reference key="3">
    <citation type="journal article" date="2009" name="J. Immunol.">
        <title>Externalization of the leaderless cytokine IL-1F6 occurs in response to lipopolysaccharide/ATP activation of transduced bone marrow macrophages.</title>
        <authorList>
            <person name="Martin U."/>
            <person name="Scholler J."/>
            <person name="Gurgel J."/>
            <person name="Renshaw B."/>
            <person name="Sims J.E."/>
            <person name="Gabel C.A."/>
        </authorList>
    </citation>
    <scope>SUBCELLULAR LOCATION</scope>
</reference>
<reference key="4">
    <citation type="journal article" date="2011" name="Blood">
        <title>IL-36R ligands are potent regulators of dendritic and T cells.</title>
        <authorList>
            <person name="Vigne S."/>
            <person name="Palmer G."/>
            <person name="Lamacchia C."/>
            <person name="Martin P."/>
            <person name="Talabot-Ayer D."/>
            <person name="Rodriguez E."/>
            <person name="Ronchi F."/>
            <person name="Sallusto F."/>
            <person name="Dinh H."/>
            <person name="Sims J.E."/>
            <person name="Gabay C."/>
        </authorList>
    </citation>
    <scope>FUNCTION</scope>
</reference>
<reference key="5">
    <citation type="journal article" date="2011" name="J. Biol. Chem.">
        <title>Interleukin-36 (IL-36) ligands require processing for full agonist (IL-36alpha, IL-36beta, and IL-36gamma) or antagonist (IL-36Ra) activity.</title>
        <authorList>
            <person name="Towne J.E."/>
            <person name="Renshaw B.R."/>
            <person name="Douangpanya J."/>
            <person name="Lipsky B.P."/>
            <person name="Shen M."/>
            <person name="Gabel C.A."/>
            <person name="Sims J.E."/>
        </authorList>
    </citation>
    <scope>FUNCTION</scope>
    <scope>PROCESSING</scope>
</reference>
<keyword id="KW-0202">Cytokine</keyword>
<keyword id="KW-0963">Cytoplasm</keyword>
<keyword id="KW-0391">Immunity</keyword>
<keyword id="KW-0395">Inflammatory response</keyword>
<keyword id="KW-0399">Innate immunity</keyword>
<keyword id="KW-1185">Reference proteome</keyword>
<keyword id="KW-0964">Secreted</keyword>
<sequence length="183" mass="20878">MMAFPPQSCVHVLPPKSIQMWEPNHNTMHGSSQSPRNYRVHDSQQMVWVLTGNTLTAVPASNNVKPVILSLIACRDTEFQDVKKGNLVFLGIKNRNLCFCCVEMEGKPTLQLKEVDIMNLYKERKAQKAFLFYHGIEGSTSVFQSVLYPGWFIATSSIERQTIILTHQRGKLVNTNFYIESEK</sequence>
<feature type="propeptide" id="PRO_0000430548" evidence="4">
    <location>
        <begin position="1"/>
        <end position="30"/>
    </location>
</feature>
<feature type="chain" id="PRO_0000153647" description="Interleukin-36 beta">
    <location>
        <begin position="31"/>
        <end position="183"/>
    </location>
</feature>
<evidence type="ECO:0000250" key="1">
    <source>
        <dbReference type="UniProtKB" id="Q9NZH7"/>
    </source>
</evidence>
<evidence type="ECO:0000269" key="2">
    <source>
    </source>
</evidence>
<evidence type="ECO:0000269" key="3">
    <source>
    </source>
</evidence>
<evidence type="ECO:0000269" key="4">
    <source>
    </source>
</evidence>
<evidence type="ECO:0000305" key="5"/>
<evidence type="ECO:0000312" key="6">
    <source>
        <dbReference type="MGI" id="MGI:1916927"/>
    </source>
</evidence>
<dbReference type="EMBL" id="AY071842">
    <property type="protein sequence ID" value="AAL67152.1"/>
    <property type="status" value="ALT_INIT"/>
    <property type="molecule type" value="mRNA"/>
</dbReference>
<dbReference type="EMBL" id="AK009787">
    <property type="protein sequence ID" value="BAB26505.1"/>
    <property type="molecule type" value="mRNA"/>
</dbReference>
<dbReference type="CCDS" id="CCDS38063.1"/>
<dbReference type="RefSeq" id="NP_081439.1">
    <property type="nucleotide sequence ID" value="NM_027163.4"/>
</dbReference>
<dbReference type="SMR" id="Q9D6Z6"/>
<dbReference type="FunCoup" id="Q9D6Z6">
    <property type="interactions" value="538"/>
</dbReference>
<dbReference type="STRING" id="10090.ENSMUSP00000028363"/>
<dbReference type="PhosphoSitePlus" id="Q9D6Z6"/>
<dbReference type="PaxDb" id="10090-ENSMUSP00000028363"/>
<dbReference type="ProteomicsDB" id="269550"/>
<dbReference type="Antibodypedia" id="33320">
    <property type="antibodies" value="212 antibodies from 30 providers"/>
</dbReference>
<dbReference type="DNASU" id="69677"/>
<dbReference type="Ensembl" id="ENSMUST00000028363.2">
    <property type="protein sequence ID" value="ENSMUSP00000028363.2"/>
    <property type="gene ID" value="ENSMUSG00000026985.2"/>
</dbReference>
<dbReference type="GeneID" id="69677"/>
<dbReference type="KEGG" id="mmu:69677"/>
<dbReference type="UCSC" id="uc008ion.1">
    <property type="organism name" value="mouse"/>
</dbReference>
<dbReference type="AGR" id="MGI:1916927"/>
<dbReference type="CTD" id="27177"/>
<dbReference type="MGI" id="MGI:1916927">
    <property type="gene designation" value="Il36b"/>
</dbReference>
<dbReference type="VEuPathDB" id="HostDB:ENSMUSG00000026985"/>
<dbReference type="eggNOG" id="ENOG502STX9">
    <property type="taxonomic scope" value="Eukaryota"/>
</dbReference>
<dbReference type="GeneTree" id="ENSGT00950000182943"/>
<dbReference type="HOGENOM" id="CLU_095373_2_0_1"/>
<dbReference type="InParanoid" id="Q9D6Z6"/>
<dbReference type="OMA" id="YCTEIQG"/>
<dbReference type="OrthoDB" id="9442925at2759"/>
<dbReference type="PhylomeDB" id="Q9D6Z6"/>
<dbReference type="TreeFam" id="TF300203"/>
<dbReference type="Reactome" id="R-MMU-9014826">
    <property type="pathway name" value="Interleukin-36 pathway"/>
</dbReference>
<dbReference type="BioGRID-ORCS" id="69677">
    <property type="hits" value="3 hits in 77 CRISPR screens"/>
</dbReference>
<dbReference type="PRO" id="PR:Q9D6Z6"/>
<dbReference type="Proteomes" id="UP000000589">
    <property type="component" value="Chromosome 2"/>
</dbReference>
<dbReference type="RNAct" id="Q9D6Z6">
    <property type="molecule type" value="protein"/>
</dbReference>
<dbReference type="Bgee" id="ENSMUSG00000026985">
    <property type="expression patterns" value="Expressed in esophagus and 16 other cell types or tissues"/>
</dbReference>
<dbReference type="ExpressionAtlas" id="Q9D6Z6">
    <property type="expression patterns" value="baseline and differential"/>
</dbReference>
<dbReference type="GO" id="GO:0005737">
    <property type="term" value="C:cytoplasm"/>
    <property type="evidence" value="ECO:0007669"/>
    <property type="project" value="UniProtKB-SubCell"/>
</dbReference>
<dbReference type="GO" id="GO:0005615">
    <property type="term" value="C:extracellular space"/>
    <property type="evidence" value="ECO:0000314"/>
    <property type="project" value="MGI"/>
</dbReference>
<dbReference type="GO" id="GO:0005125">
    <property type="term" value="F:cytokine activity"/>
    <property type="evidence" value="ECO:0000316"/>
    <property type="project" value="MGI"/>
</dbReference>
<dbReference type="GO" id="GO:0006954">
    <property type="term" value="P:inflammatory response"/>
    <property type="evidence" value="ECO:0007669"/>
    <property type="project" value="UniProtKB-KW"/>
</dbReference>
<dbReference type="GO" id="GO:0045087">
    <property type="term" value="P:innate immune response"/>
    <property type="evidence" value="ECO:0007669"/>
    <property type="project" value="UniProtKB-KW"/>
</dbReference>
<dbReference type="GO" id="GO:0001819">
    <property type="term" value="P:positive regulation of cytokine production"/>
    <property type="evidence" value="ECO:0000314"/>
    <property type="project" value="MGI"/>
</dbReference>
<dbReference type="GO" id="GO:0032755">
    <property type="term" value="P:positive regulation of interleukin-6 production"/>
    <property type="evidence" value="ECO:0000316"/>
    <property type="project" value="MGI"/>
</dbReference>
<dbReference type="GO" id="GO:0045582">
    <property type="term" value="P:positive regulation of T cell differentiation"/>
    <property type="evidence" value="ECO:0000316"/>
    <property type="project" value="MGI"/>
</dbReference>
<dbReference type="CDD" id="cd23300">
    <property type="entry name" value="beta-trefoil_IL36"/>
    <property type="match status" value="1"/>
</dbReference>
<dbReference type="FunFam" id="2.80.10.50:FF:000013">
    <property type="entry name" value="Interleukin-1"/>
    <property type="match status" value="1"/>
</dbReference>
<dbReference type="Gene3D" id="2.80.10.50">
    <property type="match status" value="1"/>
</dbReference>
<dbReference type="InterPro" id="IPR020877">
    <property type="entry name" value="IL-1_CS"/>
</dbReference>
<dbReference type="InterPro" id="IPR000975">
    <property type="entry name" value="IL-1_fam"/>
</dbReference>
<dbReference type="InterPro" id="IPR008996">
    <property type="entry name" value="IL1/FGF"/>
</dbReference>
<dbReference type="PANTHER" id="PTHR10078">
    <property type="entry name" value="INTERLEUKIN-1 FAMILY MEMBER"/>
    <property type="match status" value="1"/>
</dbReference>
<dbReference type="PANTHER" id="PTHR10078:SF24">
    <property type="entry name" value="INTERLEUKIN-36 BETA"/>
    <property type="match status" value="1"/>
</dbReference>
<dbReference type="Pfam" id="PF00340">
    <property type="entry name" value="IL1"/>
    <property type="match status" value="1"/>
</dbReference>
<dbReference type="PRINTS" id="PR00264">
    <property type="entry name" value="INTERLEUKIN1"/>
</dbReference>
<dbReference type="PRINTS" id="PR01359">
    <property type="entry name" value="INTRLEUKIN1B"/>
</dbReference>
<dbReference type="SMART" id="SM00125">
    <property type="entry name" value="IL1"/>
    <property type="match status" value="1"/>
</dbReference>
<dbReference type="SUPFAM" id="SSF50353">
    <property type="entry name" value="Cytokine"/>
    <property type="match status" value="1"/>
</dbReference>
<dbReference type="PROSITE" id="PS00253">
    <property type="entry name" value="INTERLEUKIN_1"/>
    <property type="match status" value="1"/>
</dbReference>
<gene>
    <name evidence="6" type="primary">Il36b</name>
    <name evidence="5" type="synonym">Fil1e</name>
    <name evidence="6" type="synonym">Il1f8</name>
</gene>
<comment type="function">
    <text evidence="1 3 4">Cytokine that binds to and signals through the IL1RL2/IL-36R receptor which in turn activates NF-kappa-B and MAPK signaling pathways in target cells linked to a pro-inflammatory response. Part of the IL-36 signaling system that is thought to be present in epithelial barriers and to take part in local inflammatory response; similar to the IL-1 system with which it shares the coreceptor IL1RAP. Stimulates production of interleukin-6 and interleukin-8 in synovial fibrobasts, articular chondrocytes and mature adipocytes. Induces expression of a number of antimicrobial peptides including beta-defensin 4 and beta-defensin 103 as well as a number of matrix metalloproteases (By similarity). Seems to be involved in skin inflammatory response by acting on keratinocytes, dendritic cells and indirectly on T-cells to drive tissue infiltration, cell maturation and cell proliferation. Induces the production of pro-inflammatory cytokines in bone marrow-derived dendritic cells (BMDCs), including IL-12, Il-1 beta, IL-6, TNF-alpha and IL-23, and activates p38 MAPK phosphorylation in BMDCs. Involved in dendritic cell maturation by stimulating the surface expression of CD80, CD86 and MHC class II. Induces the production of IFN-gamma, IL-4 and IL-17 by T-helper 1 (Th1) cells, cultured CD4(+) T-cells and splenocytes.</text>
</comment>
<comment type="subunit">
    <text evidence="1">Interacts with cargo receptor TMED10; the interaction mediates the translocation from the cytoplasm into the ERGIC (endoplasmic reticulum-Golgi intermediate compartment) and thereby secretion.</text>
</comment>
<comment type="subcellular location">
    <subcellularLocation>
        <location evidence="1">Cytoplasm</location>
    </subcellularLocation>
    <subcellularLocation>
        <location evidence="2">Secreted</location>
    </subcellularLocation>
    <text evidence="1 2">Secreted upon LPS treatment followed by ATP-induced activation of P2rx7. The secretion is dependent on protein unfolding and facilitated by the cargo receptor TMED10; it results in protein translocation from the cytoplasm into the ERGIC (endoplasmic reticulum-Golgi intermediate compartment) followed by vesicle entry and secretion (By similarity).</text>
</comment>
<comment type="PTM">
    <text evidence="4">N-terminal truncation leads to a dramatic enhancement of its activity (&gt;1000-fold).</text>
</comment>
<comment type="similarity">
    <text evidence="5">Belongs to the IL-1 family.</text>
</comment>
<comment type="sequence caution" evidence="5">
    <conflict type="erroneous initiation">
        <sequence resource="EMBL-CDS" id="AAL67152"/>
    </conflict>
    <text>Truncated N-terminus.</text>
</comment>
<protein>
    <recommendedName>
        <fullName>Interleukin-36 beta</fullName>
    </recommendedName>
    <alternativeName>
        <fullName>Interleukin-1 family member 8</fullName>
        <shortName>IL-1F8</shortName>
    </alternativeName>
</protein>
<organism>
    <name type="scientific">Mus musculus</name>
    <name type="common">Mouse</name>
    <dbReference type="NCBI Taxonomy" id="10090"/>
    <lineage>
        <taxon>Eukaryota</taxon>
        <taxon>Metazoa</taxon>
        <taxon>Chordata</taxon>
        <taxon>Craniata</taxon>
        <taxon>Vertebrata</taxon>
        <taxon>Euteleostomi</taxon>
        <taxon>Mammalia</taxon>
        <taxon>Eutheria</taxon>
        <taxon>Euarchontoglires</taxon>
        <taxon>Glires</taxon>
        <taxon>Rodentia</taxon>
        <taxon>Myomorpha</taxon>
        <taxon>Muroidea</taxon>
        <taxon>Muridae</taxon>
        <taxon>Murinae</taxon>
        <taxon>Mus</taxon>
        <taxon>Mus</taxon>
    </lineage>
</organism>